<name>YLJE_LACLA</name>
<organism>
    <name type="scientific">Lactococcus lactis subsp. lactis (strain IL1403)</name>
    <name type="common">Streptococcus lactis</name>
    <dbReference type="NCBI Taxonomy" id="272623"/>
    <lineage>
        <taxon>Bacteria</taxon>
        <taxon>Bacillati</taxon>
        <taxon>Bacillota</taxon>
        <taxon>Bacilli</taxon>
        <taxon>Lactobacillales</taxon>
        <taxon>Streptococcaceae</taxon>
        <taxon>Lactococcus</taxon>
    </lineage>
</organism>
<dbReference type="EC" id="2.1.1.-"/>
<dbReference type="EMBL" id="AE005176">
    <property type="protein sequence ID" value="AAK05276.1"/>
    <property type="molecule type" value="Genomic_DNA"/>
</dbReference>
<dbReference type="PIR" id="B86772">
    <property type="entry name" value="B86772"/>
</dbReference>
<dbReference type="RefSeq" id="NP_267334.1">
    <property type="nucleotide sequence ID" value="NC_002662.1"/>
</dbReference>
<dbReference type="SMR" id="Q9CGB9"/>
<dbReference type="PaxDb" id="272623-L193873"/>
<dbReference type="EnsemblBacteria" id="AAK05276">
    <property type="protein sequence ID" value="AAK05276"/>
    <property type="gene ID" value="L193873"/>
</dbReference>
<dbReference type="KEGG" id="lla:L193873"/>
<dbReference type="PATRIC" id="fig|272623.7.peg.1262"/>
<dbReference type="eggNOG" id="COG2265">
    <property type="taxonomic scope" value="Bacteria"/>
</dbReference>
<dbReference type="HOGENOM" id="CLU_014689_7_0_9"/>
<dbReference type="OrthoDB" id="9804590at2"/>
<dbReference type="Proteomes" id="UP000002196">
    <property type="component" value="Chromosome"/>
</dbReference>
<dbReference type="GO" id="GO:0070041">
    <property type="term" value="F:rRNA (uridine-C5-)-methyltransferase activity"/>
    <property type="evidence" value="ECO:0007669"/>
    <property type="project" value="TreeGrafter"/>
</dbReference>
<dbReference type="GO" id="GO:0070475">
    <property type="term" value="P:rRNA base methylation"/>
    <property type="evidence" value="ECO:0007669"/>
    <property type="project" value="TreeGrafter"/>
</dbReference>
<dbReference type="CDD" id="cd02440">
    <property type="entry name" value="AdoMet_MTases"/>
    <property type="match status" value="1"/>
</dbReference>
<dbReference type="FunFam" id="3.40.50.150:FF:000009">
    <property type="entry name" value="23S rRNA (Uracil(1939)-C(5))-methyltransferase RlmD"/>
    <property type="match status" value="1"/>
</dbReference>
<dbReference type="FunFam" id="2.40.50.1070:FF:000003">
    <property type="entry name" value="23S rRNA (Uracil-5-)-methyltransferase RumA"/>
    <property type="match status" value="1"/>
</dbReference>
<dbReference type="Gene3D" id="2.40.50.1070">
    <property type="match status" value="1"/>
</dbReference>
<dbReference type="Gene3D" id="2.40.50.140">
    <property type="entry name" value="Nucleic acid-binding proteins"/>
    <property type="match status" value="1"/>
</dbReference>
<dbReference type="Gene3D" id="3.40.50.150">
    <property type="entry name" value="Vaccinia Virus protein VP39"/>
    <property type="match status" value="1"/>
</dbReference>
<dbReference type="InterPro" id="IPR030390">
    <property type="entry name" value="MeTrfase_TrmA_AS"/>
</dbReference>
<dbReference type="InterPro" id="IPR030391">
    <property type="entry name" value="MeTrfase_TrmA_CS"/>
</dbReference>
<dbReference type="InterPro" id="IPR012340">
    <property type="entry name" value="NA-bd_OB-fold"/>
</dbReference>
<dbReference type="InterPro" id="IPR029063">
    <property type="entry name" value="SAM-dependent_MTases_sf"/>
</dbReference>
<dbReference type="InterPro" id="IPR002792">
    <property type="entry name" value="TRAM_dom"/>
</dbReference>
<dbReference type="InterPro" id="IPR010280">
    <property type="entry name" value="U5_MeTrfase_fam"/>
</dbReference>
<dbReference type="NCBIfam" id="TIGR00479">
    <property type="entry name" value="rumA"/>
    <property type="match status" value="1"/>
</dbReference>
<dbReference type="PANTHER" id="PTHR11061">
    <property type="entry name" value="RNA M5U METHYLTRANSFERASE"/>
    <property type="match status" value="1"/>
</dbReference>
<dbReference type="PANTHER" id="PTHR11061:SF30">
    <property type="entry name" value="TRNA (URACIL(54)-C(5))-METHYLTRANSFERASE"/>
    <property type="match status" value="1"/>
</dbReference>
<dbReference type="Pfam" id="PF01938">
    <property type="entry name" value="TRAM"/>
    <property type="match status" value="1"/>
</dbReference>
<dbReference type="Pfam" id="PF05958">
    <property type="entry name" value="tRNA_U5-meth_tr"/>
    <property type="match status" value="1"/>
</dbReference>
<dbReference type="SUPFAM" id="SSF50249">
    <property type="entry name" value="Nucleic acid-binding proteins"/>
    <property type="match status" value="1"/>
</dbReference>
<dbReference type="SUPFAM" id="SSF53335">
    <property type="entry name" value="S-adenosyl-L-methionine-dependent methyltransferases"/>
    <property type="match status" value="1"/>
</dbReference>
<dbReference type="PROSITE" id="PS51687">
    <property type="entry name" value="SAM_MT_RNA_M5U"/>
    <property type="match status" value="1"/>
</dbReference>
<dbReference type="PROSITE" id="PS50926">
    <property type="entry name" value="TRAM"/>
    <property type="match status" value="1"/>
</dbReference>
<dbReference type="PROSITE" id="PS01230">
    <property type="entry name" value="TRMA_1"/>
    <property type="match status" value="1"/>
</dbReference>
<dbReference type="PROSITE" id="PS01231">
    <property type="entry name" value="TRMA_2"/>
    <property type="match status" value="1"/>
</dbReference>
<protein>
    <recommendedName>
        <fullName>Uncharacterized RNA methyltransferase YljE</fullName>
        <ecNumber>2.1.1.-</ecNumber>
    </recommendedName>
</protein>
<keyword id="KW-0489">Methyltransferase</keyword>
<keyword id="KW-1185">Reference proteome</keyword>
<keyword id="KW-0949">S-adenosyl-L-methionine</keyword>
<keyword id="KW-0808">Transferase</keyword>
<proteinExistence type="inferred from homology"/>
<accession>Q9CGB9</accession>
<reference key="1">
    <citation type="journal article" date="2001" name="Genome Res.">
        <title>The complete genome sequence of the lactic acid bacterium Lactococcus lactis ssp. lactis IL1403.</title>
        <authorList>
            <person name="Bolotin A."/>
            <person name="Wincker P."/>
            <person name="Mauger S."/>
            <person name="Jaillon O."/>
            <person name="Malarme K."/>
            <person name="Weissenbach J."/>
            <person name="Ehrlich S.D."/>
            <person name="Sorokin A."/>
        </authorList>
    </citation>
    <scope>NUCLEOTIDE SEQUENCE [LARGE SCALE GENOMIC DNA]</scope>
    <source>
        <strain>IL1403</strain>
    </source>
</reference>
<feature type="chain" id="PRO_0000161987" description="Uncharacterized RNA methyltransferase YljE">
    <location>
        <begin position="1"/>
        <end position="460"/>
    </location>
</feature>
<feature type="domain" description="TRAM" evidence="1">
    <location>
        <begin position="9"/>
        <end position="67"/>
    </location>
</feature>
<feature type="active site" description="Nucleophile" evidence="2">
    <location>
        <position position="417"/>
    </location>
</feature>
<feature type="binding site" evidence="2">
    <location>
        <position position="292"/>
    </location>
    <ligand>
        <name>S-adenosyl-L-methionine</name>
        <dbReference type="ChEBI" id="CHEBI:59789"/>
    </ligand>
</feature>
<feature type="binding site" evidence="2">
    <location>
        <position position="321"/>
    </location>
    <ligand>
        <name>S-adenosyl-L-methionine</name>
        <dbReference type="ChEBI" id="CHEBI:59789"/>
    </ligand>
</feature>
<feature type="binding site" evidence="2">
    <location>
        <position position="342"/>
    </location>
    <ligand>
        <name>S-adenosyl-L-methionine</name>
        <dbReference type="ChEBI" id="CHEBI:59789"/>
    </ligand>
</feature>
<feature type="binding site" evidence="2">
    <location>
        <position position="390"/>
    </location>
    <ligand>
        <name>S-adenosyl-L-methionine</name>
        <dbReference type="ChEBI" id="CHEBI:59789"/>
    </ligand>
</feature>
<comment type="similarity">
    <text evidence="2">Belongs to the class I-like SAM-binding methyltransferase superfamily. RNA M5U methyltransferase family.</text>
</comment>
<gene>
    <name type="primary">yljE</name>
    <name type="ordered locus">LL1178</name>
    <name type="ORF">L193873</name>
</gene>
<evidence type="ECO:0000255" key="1">
    <source>
        <dbReference type="PROSITE-ProRule" id="PRU00208"/>
    </source>
</evidence>
<evidence type="ECO:0000255" key="2">
    <source>
        <dbReference type="PROSITE-ProRule" id="PRU01024"/>
    </source>
</evidence>
<sequence length="460" mass="52315">MCYNMDMTNFKKNDIFEAEVLDLTHEGQGVVKIDSFPFFVDNALPGERIKMHVLKVGKSFGFGRVDEFISQSKHRVTQLNLDYLRTGIADFGHLSYDEQVKFKHKQVVDILRKTAGKSDYPVLPVVEAIKTINYRNKAQIPVQMVDGLLTTGFYRKNSHTLIPVEDFYIQHPEIDAVVLFLRDEFRKINLQAYDEKTRKGWLRNIVVRRAFHTGEMMITLVVTSKKLPEKVELVIDHLVERFTNIKSVQLNINSGTGSFILGKEFILLYGKDFITDLMLDKTYQISAPAFYQVNTPQAEKLYETAYEFAGLKPGDVVIDAYSGIGTIGISMADRVAKVYGMEVVPAAVENAKRNAQLNELENTHYEVGTAEKIMPKWLSEGIKPDVIFVDPPRKGLDEGFIKAAAMMNPRRIVYISCNPATFARDVVRFEADGYLLDKVQPVDLFPQTHHIELVASFNKK</sequence>